<protein>
    <recommendedName>
        <fullName evidence="1">Anhydro-N-acetylmuramic acid kinase</fullName>
        <ecNumber evidence="1">2.7.1.170</ecNumber>
    </recommendedName>
    <alternativeName>
        <fullName evidence="1">AnhMurNAc kinase</fullName>
    </alternativeName>
</protein>
<reference key="1">
    <citation type="submission" date="2008-02" db="EMBL/GenBank/DDBJ databases">
        <title>Complete sequence of Yersinia pseudotuberculosis YPIII.</title>
        <authorList>
            <consortium name="US DOE Joint Genome Institute"/>
            <person name="Copeland A."/>
            <person name="Lucas S."/>
            <person name="Lapidus A."/>
            <person name="Glavina del Rio T."/>
            <person name="Dalin E."/>
            <person name="Tice H."/>
            <person name="Bruce D."/>
            <person name="Goodwin L."/>
            <person name="Pitluck S."/>
            <person name="Munk A.C."/>
            <person name="Brettin T."/>
            <person name="Detter J.C."/>
            <person name="Han C."/>
            <person name="Tapia R."/>
            <person name="Schmutz J."/>
            <person name="Larimer F."/>
            <person name="Land M."/>
            <person name="Hauser L."/>
            <person name="Challacombe J.F."/>
            <person name="Green L."/>
            <person name="Lindler L.E."/>
            <person name="Nikolich M.P."/>
            <person name="Richardson P."/>
        </authorList>
    </citation>
    <scope>NUCLEOTIDE SEQUENCE [LARGE SCALE GENOMIC DNA]</scope>
    <source>
        <strain>YPIII</strain>
    </source>
</reference>
<comment type="function">
    <text evidence="1">Catalyzes the specific phosphorylation of 1,6-anhydro-N-acetylmuramic acid (anhMurNAc) with the simultaneous cleavage of the 1,6-anhydro ring, generating MurNAc-6-P. Is required for the utilization of anhMurNAc either imported from the medium or derived from its own cell wall murein, and thus plays a role in cell wall recycling.</text>
</comment>
<comment type="catalytic activity">
    <reaction evidence="1">
        <text>1,6-anhydro-N-acetyl-beta-muramate + ATP + H2O = N-acetyl-D-muramate 6-phosphate + ADP + H(+)</text>
        <dbReference type="Rhea" id="RHEA:24952"/>
        <dbReference type="ChEBI" id="CHEBI:15377"/>
        <dbReference type="ChEBI" id="CHEBI:15378"/>
        <dbReference type="ChEBI" id="CHEBI:30616"/>
        <dbReference type="ChEBI" id="CHEBI:58690"/>
        <dbReference type="ChEBI" id="CHEBI:58722"/>
        <dbReference type="ChEBI" id="CHEBI:456216"/>
        <dbReference type="EC" id="2.7.1.170"/>
    </reaction>
</comment>
<comment type="pathway">
    <text evidence="1">Amino-sugar metabolism; 1,6-anhydro-N-acetylmuramate degradation.</text>
</comment>
<comment type="pathway">
    <text evidence="1">Cell wall biogenesis; peptidoglycan recycling.</text>
</comment>
<comment type="similarity">
    <text evidence="1">Belongs to the anhydro-N-acetylmuramic acid kinase family.</text>
</comment>
<keyword id="KW-0067">ATP-binding</keyword>
<keyword id="KW-0119">Carbohydrate metabolism</keyword>
<keyword id="KW-0418">Kinase</keyword>
<keyword id="KW-0547">Nucleotide-binding</keyword>
<keyword id="KW-0808">Transferase</keyword>
<dbReference type="EC" id="2.7.1.170" evidence="1"/>
<dbReference type="EMBL" id="CP000950">
    <property type="protein sequence ID" value="ACA68169.1"/>
    <property type="molecule type" value="Genomic_DNA"/>
</dbReference>
<dbReference type="RefSeq" id="WP_002218322.1">
    <property type="nucleotide sequence ID" value="NZ_CP009792.1"/>
</dbReference>
<dbReference type="SMR" id="B1JJ75"/>
<dbReference type="GeneID" id="57976303"/>
<dbReference type="KEGG" id="ypy:YPK_1878"/>
<dbReference type="PATRIC" id="fig|502800.11.peg.2548"/>
<dbReference type="UniPathway" id="UPA00343"/>
<dbReference type="UniPathway" id="UPA00544"/>
<dbReference type="GO" id="GO:0005524">
    <property type="term" value="F:ATP binding"/>
    <property type="evidence" value="ECO:0007669"/>
    <property type="project" value="UniProtKB-UniRule"/>
</dbReference>
<dbReference type="GO" id="GO:0016301">
    <property type="term" value="F:kinase activity"/>
    <property type="evidence" value="ECO:0007669"/>
    <property type="project" value="UniProtKB-KW"/>
</dbReference>
<dbReference type="GO" id="GO:0016773">
    <property type="term" value="F:phosphotransferase activity, alcohol group as acceptor"/>
    <property type="evidence" value="ECO:0007669"/>
    <property type="project" value="UniProtKB-UniRule"/>
</dbReference>
<dbReference type="GO" id="GO:0097175">
    <property type="term" value="P:1,6-anhydro-N-acetyl-beta-muramic acid catabolic process"/>
    <property type="evidence" value="ECO:0007669"/>
    <property type="project" value="UniProtKB-UniRule"/>
</dbReference>
<dbReference type="GO" id="GO:0006040">
    <property type="term" value="P:amino sugar metabolic process"/>
    <property type="evidence" value="ECO:0007669"/>
    <property type="project" value="InterPro"/>
</dbReference>
<dbReference type="GO" id="GO:0009254">
    <property type="term" value="P:peptidoglycan turnover"/>
    <property type="evidence" value="ECO:0007669"/>
    <property type="project" value="UniProtKB-UniRule"/>
</dbReference>
<dbReference type="CDD" id="cd24050">
    <property type="entry name" value="ASKHA_NBD_ANMK"/>
    <property type="match status" value="1"/>
</dbReference>
<dbReference type="Gene3D" id="3.30.420.40">
    <property type="match status" value="2"/>
</dbReference>
<dbReference type="HAMAP" id="MF_01270">
    <property type="entry name" value="AnhMurNAc_kinase"/>
    <property type="match status" value="1"/>
</dbReference>
<dbReference type="InterPro" id="IPR005338">
    <property type="entry name" value="Anhydro_N_Ac-Mur_kinase"/>
</dbReference>
<dbReference type="InterPro" id="IPR043129">
    <property type="entry name" value="ATPase_NBD"/>
</dbReference>
<dbReference type="NCBIfam" id="NF007138">
    <property type="entry name" value="PRK09585.1-1"/>
    <property type="match status" value="1"/>
</dbReference>
<dbReference type="NCBIfam" id="NF007139">
    <property type="entry name" value="PRK09585.1-3"/>
    <property type="match status" value="1"/>
</dbReference>
<dbReference type="NCBIfam" id="NF007148">
    <property type="entry name" value="PRK09585.3-2"/>
    <property type="match status" value="1"/>
</dbReference>
<dbReference type="PANTHER" id="PTHR30605">
    <property type="entry name" value="ANHYDRO-N-ACETYLMURAMIC ACID KINASE"/>
    <property type="match status" value="1"/>
</dbReference>
<dbReference type="PANTHER" id="PTHR30605:SF0">
    <property type="entry name" value="ANHYDRO-N-ACETYLMURAMIC ACID KINASE"/>
    <property type="match status" value="1"/>
</dbReference>
<dbReference type="Pfam" id="PF03702">
    <property type="entry name" value="AnmK"/>
    <property type="match status" value="1"/>
</dbReference>
<dbReference type="SUPFAM" id="SSF53067">
    <property type="entry name" value="Actin-like ATPase domain"/>
    <property type="match status" value="1"/>
</dbReference>
<name>ANMK_YERPY</name>
<gene>
    <name evidence="1" type="primary">anmK</name>
    <name type="ordered locus">YPK_1878</name>
</gene>
<sequence length="370" mass="39492">MKSGRFIGVMSGTSLDGVDVVLAAIDERMVAQQASYTHPIPLQLKKDILGMCQGQSTTLSAVGKLDAQLGILFAEAVLALLAKEGLSAQDITAIGCHGQTVWHEPLGEPAFTMQLGDNNRIAAMTQIATVGDFRRRDMAYGGQGAPLVPAFHHALLAHATEKRMVLNIGGIANLSVLLPDSPIRGFDTGPGNMLMDAWIWRNCSLPYDKDACWALSGHVNQPLLEQMFNDPYFRLPAPKSTGREYFNAAWLDKQLARIPGVTAEDIQATLAELTAVSITEQVRLAGGCDRLLVCGGGARNPLVMARISALLSGTEVCTTDDAGIRGDDMEALAFAWLAFRTLSGKPGNLPSVTGASRETILGAVHPVSSW</sequence>
<proteinExistence type="inferred from homology"/>
<accession>B1JJ75</accession>
<evidence type="ECO:0000255" key="1">
    <source>
        <dbReference type="HAMAP-Rule" id="MF_01270"/>
    </source>
</evidence>
<feature type="chain" id="PRO_1000140178" description="Anhydro-N-acetylmuramic acid kinase">
    <location>
        <begin position="1"/>
        <end position="370"/>
    </location>
</feature>
<feature type="binding site" evidence="1">
    <location>
        <begin position="12"/>
        <end position="19"/>
    </location>
    <ligand>
        <name>ATP</name>
        <dbReference type="ChEBI" id="CHEBI:30616"/>
    </ligand>
</feature>
<organism>
    <name type="scientific">Yersinia pseudotuberculosis serotype O:3 (strain YPIII)</name>
    <dbReference type="NCBI Taxonomy" id="502800"/>
    <lineage>
        <taxon>Bacteria</taxon>
        <taxon>Pseudomonadati</taxon>
        <taxon>Pseudomonadota</taxon>
        <taxon>Gammaproteobacteria</taxon>
        <taxon>Enterobacterales</taxon>
        <taxon>Yersiniaceae</taxon>
        <taxon>Yersinia</taxon>
    </lineage>
</organism>